<comment type="function">
    <text evidence="1">Catalyzes the reduction of the glycolytic intermediate dihydroxyacetone phosphate (DHAP) to sn-glycerol 3-phosphate (G3P), the key precursor for phospholipid synthesis.</text>
</comment>
<comment type="catalytic activity">
    <reaction evidence="1">
        <text>sn-glycerol 3-phosphate + NAD(+) = dihydroxyacetone phosphate + NADH + H(+)</text>
        <dbReference type="Rhea" id="RHEA:11092"/>
        <dbReference type="ChEBI" id="CHEBI:15378"/>
        <dbReference type="ChEBI" id="CHEBI:57540"/>
        <dbReference type="ChEBI" id="CHEBI:57597"/>
        <dbReference type="ChEBI" id="CHEBI:57642"/>
        <dbReference type="ChEBI" id="CHEBI:57945"/>
        <dbReference type="EC" id="1.1.1.94"/>
    </reaction>
    <physiologicalReaction direction="right-to-left" evidence="1">
        <dbReference type="Rhea" id="RHEA:11094"/>
    </physiologicalReaction>
</comment>
<comment type="catalytic activity">
    <reaction evidence="1">
        <text>sn-glycerol 3-phosphate + NADP(+) = dihydroxyacetone phosphate + NADPH + H(+)</text>
        <dbReference type="Rhea" id="RHEA:11096"/>
        <dbReference type="ChEBI" id="CHEBI:15378"/>
        <dbReference type="ChEBI" id="CHEBI:57597"/>
        <dbReference type="ChEBI" id="CHEBI:57642"/>
        <dbReference type="ChEBI" id="CHEBI:57783"/>
        <dbReference type="ChEBI" id="CHEBI:58349"/>
        <dbReference type="EC" id="1.1.1.94"/>
    </reaction>
    <physiologicalReaction direction="right-to-left" evidence="1">
        <dbReference type="Rhea" id="RHEA:11098"/>
    </physiologicalReaction>
</comment>
<comment type="pathway">
    <text evidence="1">Membrane lipid metabolism; glycerophospholipid metabolism.</text>
</comment>
<comment type="subcellular location">
    <subcellularLocation>
        <location evidence="1">Cytoplasm</location>
    </subcellularLocation>
</comment>
<comment type="similarity">
    <text evidence="1">Belongs to the NAD-dependent glycerol-3-phosphate dehydrogenase family.</text>
</comment>
<proteinExistence type="inferred from homology"/>
<keyword id="KW-0963">Cytoplasm</keyword>
<keyword id="KW-0444">Lipid biosynthesis</keyword>
<keyword id="KW-0443">Lipid metabolism</keyword>
<keyword id="KW-0520">NAD</keyword>
<keyword id="KW-0521">NADP</keyword>
<keyword id="KW-0547">Nucleotide-binding</keyword>
<keyword id="KW-0560">Oxidoreductase</keyword>
<keyword id="KW-0594">Phospholipid biosynthesis</keyword>
<keyword id="KW-1208">Phospholipid metabolism</keyword>
<name>GPDA_STRPC</name>
<reference key="1">
    <citation type="journal article" date="2006" name="Proc. Natl. Acad. Sci. U.S.A.">
        <title>Molecular genetic anatomy of inter- and intraserotype variation in the human bacterial pathogen group A Streptococcus.</title>
        <authorList>
            <person name="Beres S.B."/>
            <person name="Richter E.W."/>
            <person name="Nagiec M.J."/>
            <person name="Sumby P."/>
            <person name="Porcella S.F."/>
            <person name="DeLeo F.R."/>
            <person name="Musser J.M."/>
        </authorList>
    </citation>
    <scope>NUCLEOTIDE SEQUENCE [LARGE SCALE GENOMIC DNA]</scope>
    <source>
        <strain>MGAS9429</strain>
    </source>
</reference>
<protein>
    <recommendedName>
        <fullName evidence="1">Glycerol-3-phosphate dehydrogenase [NAD(P)+]</fullName>
        <ecNumber evidence="1">1.1.1.94</ecNumber>
    </recommendedName>
    <alternativeName>
        <fullName evidence="1">NAD(P)(+)-dependent glycerol-3-phosphate dehydrogenase</fullName>
    </alternativeName>
    <alternativeName>
        <fullName evidence="1">NAD(P)H-dependent dihydroxyacetone-phosphate reductase</fullName>
    </alternativeName>
</protein>
<dbReference type="EC" id="1.1.1.94" evidence="1"/>
<dbReference type="EMBL" id="CP000259">
    <property type="protein sequence ID" value="ABF31383.1"/>
    <property type="molecule type" value="Genomic_DNA"/>
</dbReference>
<dbReference type="RefSeq" id="WP_002986123.1">
    <property type="nucleotide sequence ID" value="NC_008021.1"/>
</dbReference>
<dbReference type="SMR" id="Q1JNL6"/>
<dbReference type="KEGG" id="spk:MGAS9429_Spy0195"/>
<dbReference type="HOGENOM" id="CLU_033449_0_2_9"/>
<dbReference type="UniPathway" id="UPA00940"/>
<dbReference type="Proteomes" id="UP000002433">
    <property type="component" value="Chromosome"/>
</dbReference>
<dbReference type="GO" id="GO:0005829">
    <property type="term" value="C:cytosol"/>
    <property type="evidence" value="ECO:0007669"/>
    <property type="project" value="TreeGrafter"/>
</dbReference>
<dbReference type="GO" id="GO:0047952">
    <property type="term" value="F:glycerol-3-phosphate dehydrogenase [NAD(P)+] activity"/>
    <property type="evidence" value="ECO:0007669"/>
    <property type="project" value="UniProtKB-UniRule"/>
</dbReference>
<dbReference type="GO" id="GO:0051287">
    <property type="term" value="F:NAD binding"/>
    <property type="evidence" value="ECO:0007669"/>
    <property type="project" value="InterPro"/>
</dbReference>
<dbReference type="GO" id="GO:0005975">
    <property type="term" value="P:carbohydrate metabolic process"/>
    <property type="evidence" value="ECO:0007669"/>
    <property type="project" value="InterPro"/>
</dbReference>
<dbReference type="GO" id="GO:0046167">
    <property type="term" value="P:glycerol-3-phosphate biosynthetic process"/>
    <property type="evidence" value="ECO:0007669"/>
    <property type="project" value="UniProtKB-UniRule"/>
</dbReference>
<dbReference type="GO" id="GO:0046168">
    <property type="term" value="P:glycerol-3-phosphate catabolic process"/>
    <property type="evidence" value="ECO:0007669"/>
    <property type="project" value="InterPro"/>
</dbReference>
<dbReference type="GO" id="GO:0006650">
    <property type="term" value="P:glycerophospholipid metabolic process"/>
    <property type="evidence" value="ECO:0007669"/>
    <property type="project" value="UniProtKB-UniRule"/>
</dbReference>
<dbReference type="GO" id="GO:0008654">
    <property type="term" value="P:phospholipid biosynthetic process"/>
    <property type="evidence" value="ECO:0007669"/>
    <property type="project" value="UniProtKB-KW"/>
</dbReference>
<dbReference type="FunFam" id="1.10.1040.10:FF:000001">
    <property type="entry name" value="Glycerol-3-phosphate dehydrogenase [NAD(P)+]"/>
    <property type="match status" value="1"/>
</dbReference>
<dbReference type="FunFam" id="3.40.50.720:FF:000019">
    <property type="entry name" value="Glycerol-3-phosphate dehydrogenase [NAD(P)+]"/>
    <property type="match status" value="1"/>
</dbReference>
<dbReference type="Gene3D" id="1.10.1040.10">
    <property type="entry name" value="N-(1-d-carboxylethyl)-l-norvaline Dehydrogenase, domain 2"/>
    <property type="match status" value="1"/>
</dbReference>
<dbReference type="Gene3D" id="3.40.50.720">
    <property type="entry name" value="NAD(P)-binding Rossmann-like Domain"/>
    <property type="match status" value="1"/>
</dbReference>
<dbReference type="HAMAP" id="MF_00394">
    <property type="entry name" value="NAD_Glyc3P_dehydrog"/>
    <property type="match status" value="1"/>
</dbReference>
<dbReference type="InterPro" id="IPR008927">
    <property type="entry name" value="6-PGluconate_DH-like_C_sf"/>
</dbReference>
<dbReference type="InterPro" id="IPR013328">
    <property type="entry name" value="6PGD_dom2"/>
</dbReference>
<dbReference type="InterPro" id="IPR006168">
    <property type="entry name" value="G3P_DH_NAD-dep"/>
</dbReference>
<dbReference type="InterPro" id="IPR006109">
    <property type="entry name" value="G3P_DH_NAD-dep_C"/>
</dbReference>
<dbReference type="InterPro" id="IPR011128">
    <property type="entry name" value="G3P_DH_NAD-dep_N"/>
</dbReference>
<dbReference type="InterPro" id="IPR036291">
    <property type="entry name" value="NAD(P)-bd_dom_sf"/>
</dbReference>
<dbReference type="NCBIfam" id="NF000940">
    <property type="entry name" value="PRK00094.1-2"/>
    <property type="match status" value="1"/>
</dbReference>
<dbReference type="NCBIfam" id="NF000941">
    <property type="entry name" value="PRK00094.1-3"/>
    <property type="match status" value="1"/>
</dbReference>
<dbReference type="NCBIfam" id="NF000942">
    <property type="entry name" value="PRK00094.1-4"/>
    <property type="match status" value="1"/>
</dbReference>
<dbReference type="PANTHER" id="PTHR11728">
    <property type="entry name" value="GLYCEROL-3-PHOSPHATE DEHYDROGENASE"/>
    <property type="match status" value="1"/>
</dbReference>
<dbReference type="PANTHER" id="PTHR11728:SF1">
    <property type="entry name" value="GLYCEROL-3-PHOSPHATE DEHYDROGENASE [NAD(+)] 2, CHLOROPLASTIC"/>
    <property type="match status" value="1"/>
</dbReference>
<dbReference type="Pfam" id="PF07479">
    <property type="entry name" value="NAD_Gly3P_dh_C"/>
    <property type="match status" value="1"/>
</dbReference>
<dbReference type="Pfam" id="PF01210">
    <property type="entry name" value="NAD_Gly3P_dh_N"/>
    <property type="match status" value="1"/>
</dbReference>
<dbReference type="PIRSF" id="PIRSF000114">
    <property type="entry name" value="Glycerol-3-P_dh"/>
    <property type="match status" value="1"/>
</dbReference>
<dbReference type="PRINTS" id="PR00077">
    <property type="entry name" value="GPDHDRGNASE"/>
</dbReference>
<dbReference type="SUPFAM" id="SSF48179">
    <property type="entry name" value="6-phosphogluconate dehydrogenase C-terminal domain-like"/>
    <property type="match status" value="1"/>
</dbReference>
<dbReference type="SUPFAM" id="SSF51735">
    <property type="entry name" value="NAD(P)-binding Rossmann-fold domains"/>
    <property type="match status" value="1"/>
</dbReference>
<dbReference type="PROSITE" id="PS00957">
    <property type="entry name" value="NAD_G3PDH"/>
    <property type="match status" value="1"/>
</dbReference>
<gene>
    <name evidence="1" type="primary">gpsA</name>
    <name type="ordered locus">MGAS9429_Spy0195</name>
</gene>
<accession>Q1JNL6</accession>
<organism>
    <name type="scientific">Streptococcus pyogenes serotype M12 (strain MGAS9429)</name>
    <dbReference type="NCBI Taxonomy" id="370551"/>
    <lineage>
        <taxon>Bacteria</taxon>
        <taxon>Bacillati</taxon>
        <taxon>Bacillota</taxon>
        <taxon>Bacilli</taxon>
        <taxon>Lactobacillales</taxon>
        <taxon>Streptococcaceae</taxon>
        <taxon>Streptococcus</taxon>
    </lineage>
</organism>
<sequence length="338" mass="36681">MTKQKVAILGPGSWGTALSQVLNDNGHDVRLWGNIPDQIEEINTKHTNRHYFKDIVLDKNITATLDLGQALSDVDAVLFVVPTKVTRLVARQVAAILDHKVVVMHASKGLEPETHERLSTILEEEIPAHFRSEVVVVSGPSHAEETIVRDITLITAASKDIEAAKYVQSLFSNHYFRLYTNTDVIGVETAGALKNIIAVGAGALHGLGYGDNAKAAVITRGLAEITRLGVKLGADPLTYSGLSGVGDLIVTGTSVHSRNWRAGAALGRGEKLEDIERNMGMVIEGIATTKVAYEIAQDLGVYMPITTAIYKSIYEGADIKESILGMMSNEFRSENEWH</sequence>
<feature type="chain" id="PRO_0000255381" description="Glycerol-3-phosphate dehydrogenase [NAD(P)+]">
    <location>
        <begin position="1"/>
        <end position="338"/>
    </location>
</feature>
<feature type="active site" description="Proton acceptor" evidence="1">
    <location>
        <position position="194"/>
    </location>
</feature>
<feature type="binding site" evidence="1">
    <location>
        <position position="13"/>
    </location>
    <ligand>
        <name>NADPH</name>
        <dbReference type="ChEBI" id="CHEBI:57783"/>
    </ligand>
</feature>
<feature type="binding site" evidence="1">
    <location>
        <position position="14"/>
    </location>
    <ligand>
        <name>NADPH</name>
        <dbReference type="ChEBI" id="CHEBI:57783"/>
    </ligand>
</feature>
<feature type="binding site" evidence="1">
    <location>
        <position position="108"/>
    </location>
    <ligand>
        <name>NADPH</name>
        <dbReference type="ChEBI" id="CHEBI:57783"/>
    </ligand>
</feature>
<feature type="binding site" evidence="1">
    <location>
        <position position="108"/>
    </location>
    <ligand>
        <name>sn-glycerol 3-phosphate</name>
        <dbReference type="ChEBI" id="CHEBI:57597"/>
    </ligand>
</feature>
<feature type="binding site" evidence="1">
    <location>
        <position position="139"/>
    </location>
    <ligand>
        <name>sn-glycerol 3-phosphate</name>
        <dbReference type="ChEBI" id="CHEBI:57597"/>
    </ligand>
</feature>
<feature type="binding site" evidence="1">
    <location>
        <position position="141"/>
    </location>
    <ligand>
        <name>sn-glycerol 3-phosphate</name>
        <dbReference type="ChEBI" id="CHEBI:57597"/>
    </ligand>
</feature>
<feature type="binding site" evidence="1">
    <location>
        <position position="143"/>
    </location>
    <ligand>
        <name>NADPH</name>
        <dbReference type="ChEBI" id="CHEBI:57783"/>
    </ligand>
</feature>
<feature type="binding site" evidence="1">
    <location>
        <position position="194"/>
    </location>
    <ligand>
        <name>sn-glycerol 3-phosphate</name>
        <dbReference type="ChEBI" id="CHEBI:57597"/>
    </ligand>
</feature>
<feature type="binding site" evidence="1">
    <location>
        <position position="247"/>
    </location>
    <ligand>
        <name>sn-glycerol 3-phosphate</name>
        <dbReference type="ChEBI" id="CHEBI:57597"/>
    </ligand>
</feature>
<feature type="binding site" evidence="1">
    <location>
        <position position="257"/>
    </location>
    <ligand>
        <name>sn-glycerol 3-phosphate</name>
        <dbReference type="ChEBI" id="CHEBI:57597"/>
    </ligand>
</feature>
<feature type="binding site" evidence="1">
    <location>
        <position position="258"/>
    </location>
    <ligand>
        <name>NADPH</name>
        <dbReference type="ChEBI" id="CHEBI:57783"/>
    </ligand>
</feature>
<feature type="binding site" evidence="1">
    <location>
        <position position="258"/>
    </location>
    <ligand>
        <name>sn-glycerol 3-phosphate</name>
        <dbReference type="ChEBI" id="CHEBI:57597"/>
    </ligand>
</feature>
<feature type="binding site" evidence="1">
    <location>
        <position position="259"/>
    </location>
    <ligand>
        <name>sn-glycerol 3-phosphate</name>
        <dbReference type="ChEBI" id="CHEBI:57597"/>
    </ligand>
</feature>
<feature type="binding site" evidence="1">
    <location>
        <position position="282"/>
    </location>
    <ligand>
        <name>NADPH</name>
        <dbReference type="ChEBI" id="CHEBI:57783"/>
    </ligand>
</feature>
<feature type="binding site" evidence="1">
    <location>
        <position position="284"/>
    </location>
    <ligand>
        <name>NADPH</name>
        <dbReference type="ChEBI" id="CHEBI:57783"/>
    </ligand>
</feature>
<evidence type="ECO:0000255" key="1">
    <source>
        <dbReference type="HAMAP-Rule" id="MF_00394"/>
    </source>
</evidence>